<sequence>MTRRALISVSDKTGIEAFARALVERGWELLSTGGTLAALRAAGIPATAVSDVTGFPEILDGRVKTLHPAIHGGILARREEGHLAQLAEHGLDLIDLVCVNLYPFRETVARGATFEEAIENIDIGGPAMIRAAAKNHAGVLVLVDPADYGLAFQDEVSQTDRRRLAAKAFRHTSDYDAAISTYLAGADEAGETLPEHLTLDLSRIAAVRYGENPHQPGAIYRLGTERGPVLDARLLSGKPMSFNNYADADAAWALAQELAAQEDQPPGTRAVCVAVKHANPCGVAVADSVQAAWEQARDADTLSVFGGVVAVSRPVDLAAAQSMRGTFLEVLIAPDVTPEAVAWFAAKKPDLRVLVADTAAHPGTLDVRPLAGGFAVQRRDTRPWDDLCPEVVTVRPPTEQEWGDLRFAWAVVKHARSNAVVLAKNGVTVGLGAGAVSRIWAAERAVQNAGERARGAVLASEAFFPFDDVVRLAAEAGVTAVLQPGGAKRDPEVIAAANELGLSMVFTGSRHFRH</sequence>
<feature type="chain" id="PRO_1000018884" description="Bifunctional purine biosynthesis protein PurH">
    <location>
        <begin position="1"/>
        <end position="514"/>
    </location>
</feature>
<feature type="domain" description="MGS-like" evidence="2">
    <location>
        <begin position="1"/>
        <end position="143"/>
    </location>
</feature>
<evidence type="ECO:0000255" key="1">
    <source>
        <dbReference type="HAMAP-Rule" id="MF_00139"/>
    </source>
</evidence>
<evidence type="ECO:0000255" key="2">
    <source>
        <dbReference type="PROSITE-ProRule" id="PRU01202"/>
    </source>
</evidence>
<proteinExistence type="inferred from homology"/>
<protein>
    <recommendedName>
        <fullName evidence="1">Bifunctional purine biosynthesis protein PurH</fullName>
    </recommendedName>
    <domain>
        <recommendedName>
            <fullName evidence="1">Phosphoribosylaminoimidazolecarboxamide formyltransferase</fullName>
            <ecNumber evidence="1">2.1.2.3</ecNumber>
        </recommendedName>
        <alternativeName>
            <fullName evidence="1">AICAR transformylase</fullName>
        </alternativeName>
    </domain>
    <domain>
        <recommendedName>
            <fullName evidence="1">IMP cyclohydrolase</fullName>
            <ecNumber evidence="1">3.5.4.10</ecNumber>
        </recommendedName>
        <alternativeName>
            <fullName evidence="1">ATIC</fullName>
        </alternativeName>
        <alternativeName>
            <fullName evidence="1">IMP synthase</fullName>
        </alternativeName>
        <alternativeName>
            <fullName evidence="1">Inosinicase</fullName>
        </alternativeName>
    </domain>
</protein>
<organism>
    <name type="scientific">Deinococcus geothermalis (strain DSM 11300 / CIP 105573 / AG-3a)</name>
    <dbReference type="NCBI Taxonomy" id="319795"/>
    <lineage>
        <taxon>Bacteria</taxon>
        <taxon>Thermotogati</taxon>
        <taxon>Deinococcota</taxon>
        <taxon>Deinococci</taxon>
        <taxon>Deinococcales</taxon>
        <taxon>Deinococcaceae</taxon>
        <taxon>Deinococcus</taxon>
    </lineage>
</organism>
<accession>Q1J119</accession>
<gene>
    <name evidence="1" type="primary">purH</name>
    <name type="ordered locus">Dgeo_0513</name>
</gene>
<comment type="catalytic activity">
    <reaction evidence="1">
        <text>(6R)-10-formyltetrahydrofolate + 5-amino-1-(5-phospho-beta-D-ribosyl)imidazole-4-carboxamide = 5-formamido-1-(5-phospho-D-ribosyl)imidazole-4-carboxamide + (6S)-5,6,7,8-tetrahydrofolate</text>
        <dbReference type="Rhea" id="RHEA:22192"/>
        <dbReference type="ChEBI" id="CHEBI:57453"/>
        <dbReference type="ChEBI" id="CHEBI:58467"/>
        <dbReference type="ChEBI" id="CHEBI:58475"/>
        <dbReference type="ChEBI" id="CHEBI:195366"/>
        <dbReference type="EC" id="2.1.2.3"/>
    </reaction>
</comment>
<comment type="catalytic activity">
    <reaction evidence="1">
        <text>IMP + H2O = 5-formamido-1-(5-phospho-D-ribosyl)imidazole-4-carboxamide</text>
        <dbReference type="Rhea" id="RHEA:18445"/>
        <dbReference type="ChEBI" id="CHEBI:15377"/>
        <dbReference type="ChEBI" id="CHEBI:58053"/>
        <dbReference type="ChEBI" id="CHEBI:58467"/>
        <dbReference type="EC" id="3.5.4.10"/>
    </reaction>
</comment>
<comment type="pathway">
    <text evidence="1">Purine metabolism; IMP biosynthesis via de novo pathway; 5-formamido-1-(5-phospho-D-ribosyl)imidazole-4-carboxamide from 5-amino-1-(5-phospho-D-ribosyl)imidazole-4-carboxamide (10-formyl THF route): step 1/1.</text>
</comment>
<comment type="pathway">
    <text evidence="1">Purine metabolism; IMP biosynthesis via de novo pathway; IMP from 5-formamido-1-(5-phospho-D-ribosyl)imidazole-4-carboxamide: step 1/1.</text>
</comment>
<comment type="domain">
    <text evidence="1">The IMP cyclohydrolase activity resides in the N-terminal region.</text>
</comment>
<comment type="similarity">
    <text evidence="1">Belongs to the PurH family.</text>
</comment>
<reference key="1">
    <citation type="submission" date="2006-04" db="EMBL/GenBank/DDBJ databases">
        <title>Complete sequence of chromosome of Deinococcus geothermalis DSM 11300.</title>
        <authorList>
            <person name="Copeland A."/>
            <person name="Lucas S."/>
            <person name="Lapidus A."/>
            <person name="Barry K."/>
            <person name="Detter J.C."/>
            <person name="Glavina del Rio T."/>
            <person name="Hammon N."/>
            <person name="Israni S."/>
            <person name="Dalin E."/>
            <person name="Tice H."/>
            <person name="Pitluck S."/>
            <person name="Brettin T."/>
            <person name="Bruce D."/>
            <person name="Han C."/>
            <person name="Tapia R."/>
            <person name="Saunders E."/>
            <person name="Gilna P."/>
            <person name="Schmutz J."/>
            <person name="Larimer F."/>
            <person name="Land M."/>
            <person name="Hauser L."/>
            <person name="Kyrpides N."/>
            <person name="Kim E."/>
            <person name="Daly M.J."/>
            <person name="Fredrickson J.K."/>
            <person name="Makarova K.S."/>
            <person name="Gaidamakova E.K."/>
            <person name="Zhai M."/>
            <person name="Richardson P."/>
        </authorList>
    </citation>
    <scope>NUCLEOTIDE SEQUENCE [LARGE SCALE GENOMIC DNA]</scope>
    <source>
        <strain>DSM 11300 / CIP 105573 / AG-3a</strain>
    </source>
</reference>
<keyword id="KW-0378">Hydrolase</keyword>
<keyword id="KW-0511">Multifunctional enzyme</keyword>
<keyword id="KW-0658">Purine biosynthesis</keyword>
<keyword id="KW-0808">Transferase</keyword>
<name>PUR9_DEIGD</name>
<dbReference type="EC" id="2.1.2.3" evidence="1"/>
<dbReference type="EC" id="3.5.4.10" evidence="1"/>
<dbReference type="EMBL" id="CP000359">
    <property type="protein sequence ID" value="ABF44815.1"/>
    <property type="molecule type" value="Genomic_DNA"/>
</dbReference>
<dbReference type="RefSeq" id="WP_011529657.1">
    <property type="nucleotide sequence ID" value="NC_008025.1"/>
</dbReference>
<dbReference type="SMR" id="Q1J119"/>
<dbReference type="STRING" id="319795.Dgeo_0513"/>
<dbReference type="KEGG" id="dge:Dgeo_0513"/>
<dbReference type="eggNOG" id="COG0138">
    <property type="taxonomic scope" value="Bacteria"/>
</dbReference>
<dbReference type="HOGENOM" id="CLU_016316_5_2_0"/>
<dbReference type="UniPathway" id="UPA00074">
    <property type="reaction ID" value="UER00133"/>
</dbReference>
<dbReference type="UniPathway" id="UPA00074">
    <property type="reaction ID" value="UER00135"/>
</dbReference>
<dbReference type="Proteomes" id="UP000002431">
    <property type="component" value="Chromosome"/>
</dbReference>
<dbReference type="GO" id="GO:0005829">
    <property type="term" value="C:cytosol"/>
    <property type="evidence" value="ECO:0007669"/>
    <property type="project" value="TreeGrafter"/>
</dbReference>
<dbReference type="GO" id="GO:0003937">
    <property type="term" value="F:IMP cyclohydrolase activity"/>
    <property type="evidence" value="ECO:0007669"/>
    <property type="project" value="UniProtKB-UniRule"/>
</dbReference>
<dbReference type="GO" id="GO:0004643">
    <property type="term" value="F:phosphoribosylaminoimidazolecarboxamide formyltransferase activity"/>
    <property type="evidence" value="ECO:0007669"/>
    <property type="project" value="UniProtKB-UniRule"/>
</dbReference>
<dbReference type="GO" id="GO:0006189">
    <property type="term" value="P:'de novo' IMP biosynthetic process"/>
    <property type="evidence" value="ECO:0007669"/>
    <property type="project" value="UniProtKB-UniRule"/>
</dbReference>
<dbReference type="CDD" id="cd01421">
    <property type="entry name" value="IMPCH"/>
    <property type="match status" value="1"/>
</dbReference>
<dbReference type="FunFam" id="3.40.140.20:FF:000001">
    <property type="entry name" value="Bifunctional purine biosynthesis protein PurH"/>
    <property type="match status" value="1"/>
</dbReference>
<dbReference type="FunFam" id="3.40.50.1380:FF:000001">
    <property type="entry name" value="Bifunctional purine biosynthesis protein PurH"/>
    <property type="match status" value="1"/>
</dbReference>
<dbReference type="Gene3D" id="3.40.140.20">
    <property type="match status" value="2"/>
</dbReference>
<dbReference type="Gene3D" id="3.40.50.1380">
    <property type="entry name" value="Methylglyoxal synthase-like domain"/>
    <property type="match status" value="1"/>
</dbReference>
<dbReference type="HAMAP" id="MF_00139">
    <property type="entry name" value="PurH"/>
    <property type="match status" value="1"/>
</dbReference>
<dbReference type="InterPro" id="IPR024051">
    <property type="entry name" value="AICAR_Tfase_dup_dom_sf"/>
</dbReference>
<dbReference type="InterPro" id="IPR016193">
    <property type="entry name" value="Cytidine_deaminase-like"/>
</dbReference>
<dbReference type="InterPro" id="IPR011607">
    <property type="entry name" value="MGS-like_dom"/>
</dbReference>
<dbReference type="InterPro" id="IPR036914">
    <property type="entry name" value="MGS-like_dom_sf"/>
</dbReference>
<dbReference type="InterPro" id="IPR002695">
    <property type="entry name" value="PurH-like"/>
</dbReference>
<dbReference type="NCBIfam" id="NF002049">
    <property type="entry name" value="PRK00881.1"/>
    <property type="match status" value="1"/>
</dbReference>
<dbReference type="NCBIfam" id="TIGR00355">
    <property type="entry name" value="purH"/>
    <property type="match status" value="1"/>
</dbReference>
<dbReference type="PANTHER" id="PTHR11692:SF0">
    <property type="entry name" value="BIFUNCTIONAL PURINE BIOSYNTHESIS PROTEIN ATIC"/>
    <property type="match status" value="1"/>
</dbReference>
<dbReference type="PANTHER" id="PTHR11692">
    <property type="entry name" value="BIFUNCTIONAL PURINE BIOSYNTHESIS PROTEIN PURH"/>
    <property type="match status" value="1"/>
</dbReference>
<dbReference type="Pfam" id="PF01808">
    <property type="entry name" value="AICARFT_IMPCHas"/>
    <property type="match status" value="1"/>
</dbReference>
<dbReference type="Pfam" id="PF02142">
    <property type="entry name" value="MGS"/>
    <property type="match status" value="1"/>
</dbReference>
<dbReference type="PIRSF" id="PIRSF000414">
    <property type="entry name" value="AICARFT_IMPCHas"/>
    <property type="match status" value="1"/>
</dbReference>
<dbReference type="SMART" id="SM00798">
    <property type="entry name" value="AICARFT_IMPCHas"/>
    <property type="match status" value="1"/>
</dbReference>
<dbReference type="SMART" id="SM00851">
    <property type="entry name" value="MGS"/>
    <property type="match status" value="1"/>
</dbReference>
<dbReference type="SUPFAM" id="SSF53927">
    <property type="entry name" value="Cytidine deaminase-like"/>
    <property type="match status" value="1"/>
</dbReference>
<dbReference type="SUPFAM" id="SSF52335">
    <property type="entry name" value="Methylglyoxal synthase-like"/>
    <property type="match status" value="1"/>
</dbReference>
<dbReference type="PROSITE" id="PS51855">
    <property type="entry name" value="MGS"/>
    <property type="match status" value="1"/>
</dbReference>